<feature type="chain" id="PRO_0000416524" description="tRNA (pseudouridine(54)-N(1))-methyltransferase">
    <location>
        <begin position="1"/>
        <end position="198"/>
    </location>
</feature>
<feature type="binding site" evidence="1">
    <location>
        <position position="128"/>
    </location>
    <ligand>
        <name>S-adenosyl-L-methionine</name>
        <dbReference type="ChEBI" id="CHEBI:59789"/>
    </ligand>
</feature>
<gene>
    <name evidence="1" type="primary">trmY</name>
    <name type="ordered locus">HVO_1989</name>
</gene>
<sequence>MRQFIVTGHDAPTTPDFSLDDIAGGAGRLDVLCRCVNSAFFLSHDIREDVRVHLVLGDEYTVRFEGSELRRLNPDERSTAALIRKALEKREEAIGHMPAESSPGVSIRRMGFETTLEEAASDATVVELHEDGDPVVQVEPPENPLFVLSDHHDFTDEEAELLAAAADERVRLGPEILHADHSITVAHNYLDTAGYSRY</sequence>
<protein>
    <recommendedName>
        <fullName evidence="1">tRNA (pseudouridine(54)-N(1))-methyltransferase</fullName>
        <ecNumber evidence="1">2.1.1.257</ecNumber>
    </recommendedName>
</protein>
<name>TRMY_HALVD</name>
<accession>D4GTL8</accession>
<dbReference type="EC" id="2.1.1.257" evidence="1"/>
<dbReference type="EMBL" id="CP001956">
    <property type="protein sequence ID" value="ADE02260.1"/>
    <property type="molecule type" value="Genomic_DNA"/>
</dbReference>
<dbReference type="RefSeq" id="WP_004041871.1">
    <property type="nucleotide sequence ID" value="NC_013967.1"/>
</dbReference>
<dbReference type="SMR" id="D4GTL8"/>
<dbReference type="STRING" id="309800.HVO_1989"/>
<dbReference type="PaxDb" id="309800-C498_05231"/>
<dbReference type="EnsemblBacteria" id="ADE02260">
    <property type="protein sequence ID" value="ADE02260"/>
    <property type="gene ID" value="HVO_1989"/>
</dbReference>
<dbReference type="GeneID" id="8926438"/>
<dbReference type="KEGG" id="hvo:HVO_1989"/>
<dbReference type="eggNOG" id="arCOG01239">
    <property type="taxonomic scope" value="Archaea"/>
</dbReference>
<dbReference type="HOGENOM" id="CLU_107018_0_0_2"/>
<dbReference type="OrthoDB" id="27492at2157"/>
<dbReference type="BRENDA" id="2.1.1.257">
    <property type="organism ID" value="2561"/>
</dbReference>
<dbReference type="Proteomes" id="UP000008243">
    <property type="component" value="Chromosome"/>
</dbReference>
<dbReference type="GO" id="GO:0005737">
    <property type="term" value="C:cytoplasm"/>
    <property type="evidence" value="ECO:0007669"/>
    <property type="project" value="UniProtKB-SubCell"/>
</dbReference>
<dbReference type="GO" id="GO:0008757">
    <property type="term" value="F:S-adenosylmethionine-dependent methyltransferase activity"/>
    <property type="evidence" value="ECO:0007669"/>
    <property type="project" value="UniProtKB-UniRule"/>
</dbReference>
<dbReference type="GO" id="GO:0008175">
    <property type="term" value="F:tRNA methyltransferase activity"/>
    <property type="evidence" value="ECO:0000315"/>
    <property type="project" value="UniProtKB"/>
</dbReference>
<dbReference type="GO" id="GO:0030488">
    <property type="term" value="P:tRNA methylation"/>
    <property type="evidence" value="ECO:0000315"/>
    <property type="project" value="UniProtKB"/>
</dbReference>
<dbReference type="CDD" id="cd18087">
    <property type="entry name" value="TrmY-like"/>
    <property type="match status" value="1"/>
</dbReference>
<dbReference type="FunFam" id="3.40.1280.10:FF:000041">
    <property type="entry name" value="tRNA (pseudouridine(54)-N(1))-methyltransferase"/>
    <property type="match status" value="1"/>
</dbReference>
<dbReference type="Gene3D" id="3.40.1280.10">
    <property type="match status" value="1"/>
</dbReference>
<dbReference type="HAMAP" id="MF_00587">
    <property type="entry name" value="tRNA_methyltr_TrmY"/>
    <property type="match status" value="1"/>
</dbReference>
<dbReference type="InterPro" id="IPR029028">
    <property type="entry name" value="Alpha/beta_knot_MTases"/>
</dbReference>
<dbReference type="InterPro" id="IPR007158">
    <property type="entry name" value="TrmY"/>
</dbReference>
<dbReference type="InterPro" id="IPR029026">
    <property type="entry name" value="tRNA_m1G_MTases_N"/>
</dbReference>
<dbReference type="NCBIfam" id="NF002560">
    <property type="entry name" value="PRK02135.1"/>
    <property type="match status" value="1"/>
</dbReference>
<dbReference type="PANTHER" id="PTHR40703">
    <property type="entry name" value="TRNA (PSEUDOURIDINE(54)-N(1))-METHYLTRANSFERASE"/>
    <property type="match status" value="1"/>
</dbReference>
<dbReference type="PANTHER" id="PTHR40703:SF1">
    <property type="entry name" value="TRNA (PSEUDOURIDINE(54)-N(1))-METHYLTRANSFERASE"/>
    <property type="match status" value="1"/>
</dbReference>
<dbReference type="Pfam" id="PF04013">
    <property type="entry name" value="Methyltrn_RNA_2"/>
    <property type="match status" value="1"/>
</dbReference>
<dbReference type="SUPFAM" id="SSF75217">
    <property type="entry name" value="alpha/beta knot"/>
    <property type="match status" value="1"/>
</dbReference>
<organism>
    <name type="scientific">Haloferax volcanii (strain ATCC 29605 / DSM 3757 / JCM 8879 / NBRC 14742 / NCIMB 2012 / VKM B-1768 / DS2)</name>
    <name type="common">Halobacterium volcanii</name>
    <dbReference type="NCBI Taxonomy" id="309800"/>
    <lineage>
        <taxon>Archaea</taxon>
        <taxon>Methanobacteriati</taxon>
        <taxon>Methanobacteriota</taxon>
        <taxon>Stenosarchaea group</taxon>
        <taxon>Halobacteria</taxon>
        <taxon>Halobacteriales</taxon>
        <taxon>Haloferacaceae</taxon>
        <taxon>Haloferax</taxon>
    </lineage>
</organism>
<evidence type="ECO:0000255" key="1">
    <source>
        <dbReference type="HAMAP-Rule" id="MF_00587"/>
    </source>
</evidence>
<evidence type="ECO:0000269" key="2">
    <source>
    </source>
</evidence>
<evidence type="ECO:0000269" key="3">
    <source>
    </source>
</evidence>
<keyword id="KW-0963">Cytoplasm</keyword>
<keyword id="KW-0489">Methyltransferase</keyword>
<keyword id="KW-1185">Reference proteome</keyword>
<keyword id="KW-0949">S-adenosyl-L-methionine</keyword>
<keyword id="KW-0808">Transferase</keyword>
<keyword id="KW-0819">tRNA processing</keyword>
<reference key="1">
    <citation type="journal article" date="2010" name="PLoS ONE">
        <title>The complete genome sequence of Haloferax volcanii DS2, a model archaeon.</title>
        <authorList>
            <person name="Hartman A.L."/>
            <person name="Norais C."/>
            <person name="Badger J.H."/>
            <person name="Delmas S."/>
            <person name="Haldenby S."/>
            <person name="Madupu R."/>
            <person name="Robinson J."/>
            <person name="Khouri H."/>
            <person name="Ren Q."/>
            <person name="Lowe T.M."/>
            <person name="Maupin-Furlow J."/>
            <person name="Pohlschroder M."/>
            <person name="Daniels C."/>
            <person name="Pfeiffer F."/>
            <person name="Allers T."/>
            <person name="Eisen J.A."/>
        </authorList>
    </citation>
    <scope>NUCLEOTIDE SEQUENCE [LARGE SCALE GENOMIC DNA]</scope>
    <source>
        <strain>ATCC 29605 / DSM 3757 / JCM 8879 / NBRC 14742 / NCIMB 2012 / VKM B-1768 / DS2</strain>
    </source>
</reference>
<reference key="2">
    <citation type="journal article" date="2012" name="RNA">
        <title>Identification of the enzyme responsible for N1-methylation of pseudouridine 54 in archaeal tRNAs.</title>
        <authorList>
            <person name="Wurm J.P."/>
            <person name="Griese M."/>
            <person name="Bahr U."/>
            <person name="Held M."/>
            <person name="Heckel A."/>
            <person name="Karas M."/>
            <person name="Soppa J."/>
            <person name="Woehnert J."/>
        </authorList>
    </citation>
    <scope>FUNCTION</scope>
    <scope>CATALYTIC ACTIVITY</scope>
    <scope>DISRUPTION PHENOTYPE</scope>
</reference>
<reference key="3">
    <citation type="journal article" date="2012" name="RNA">
        <title>The archaeal COG1901/DUF358 SPOUT-methyltransferase members, together with pseudouridine synthase Pus10, catalyze the formation of 1-methylpseudouridine at position 54 of tRNA.</title>
        <authorList>
            <person name="Chatterjee K."/>
            <person name="Blaby I.K."/>
            <person name="Thiaville P.C."/>
            <person name="Majumder M."/>
            <person name="Grosjean H."/>
            <person name="Yuan Y.A."/>
            <person name="Gupta R."/>
            <person name="de Crecy-Lagard V."/>
        </authorList>
    </citation>
    <scope>FUNCTION</scope>
    <scope>CATALYTIC ACTIVITY</scope>
    <scope>DISRUPTION PHENOTYPE</scope>
    <scope>GENE NAME</scope>
</reference>
<proteinExistence type="evidence at protein level"/>
<comment type="function">
    <text evidence="1 2 3">Specifically catalyzes the N1-methylation of pseudouridine at position 54 (Psi54) in tRNAs.</text>
</comment>
<comment type="catalytic activity">
    <reaction evidence="1 2 3">
        <text>pseudouridine(54) in tRNA + S-adenosyl-L-methionine = N(1)-methylpseudouridine(54) in tRNA + S-adenosyl-L-homocysteine + H(+)</text>
        <dbReference type="Rhea" id="RHEA:55292"/>
        <dbReference type="Rhea" id="RHEA-COMP:14140"/>
        <dbReference type="Rhea" id="RHEA-COMP:14141"/>
        <dbReference type="ChEBI" id="CHEBI:15378"/>
        <dbReference type="ChEBI" id="CHEBI:57856"/>
        <dbReference type="ChEBI" id="CHEBI:59789"/>
        <dbReference type="ChEBI" id="CHEBI:65314"/>
        <dbReference type="ChEBI" id="CHEBI:74890"/>
        <dbReference type="EC" id="2.1.1.257"/>
    </reaction>
</comment>
<comment type="subunit">
    <text evidence="1">Homodimer.</text>
</comment>
<comment type="subcellular location">
    <subcellularLocation>
        <location evidence="1">Cytoplasm</location>
    </subcellularLocation>
</comment>
<comment type="disruption phenotype">
    <text evidence="2 3">Deletion leads to the absence of 1-methylpseudouridine at position 54 of tRNA, but does not lead to any obvious phenotype.</text>
</comment>
<comment type="similarity">
    <text evidence="1">Belongs to the methyltransferase superfamily. TrmY family.</text>
</comment>